<organism>
    <name type="scientific">Acaryochloris marina (strain MBIC 11017)</name>
    <dbReference type="NCBI Taxonomy" id="329726"/>
    <lineage>
        <taxon>Bacteria</taxon>
        <taxon>Bacillati</taxon>
        <taxon>Cyanobacteriota</taxon>
        <taxon>Cyanophyceae</taxon>
        <taxon>Acaryochloridales</taxon>
        <taxon>Acaryochloridaceae</taxon>
        <taxon>Acaryochloris</taxon>
    </lineage>
</organism>
<gene>
    <name evidence="1" type="primary">rpsP</name>
    <name evidence="1" type="synonym">rps16</name>
    <name type="ordered locus">AM1_4098</name>
</gene>
<feature type="chain" id="PRO_1000080133" description="Small ribosomal subunit protein bS16">
    <location>
        <begin position="1"/>
        <end position="84"/>
    </location>
</feature>
<dbReference type="EMBL" id="CP000828">
    <property type="protein sequence ID" value="ABW29079.1"/>
    <property type="molecule type" value="Genomic_DNA"/>
</dbReference>
<dbReference type="RefSeq" id="WP_010471471.1">
    <property type="nucleotide sequence ID" value="NC_009925.1"/>
</dbReference>
<dbReference type="SMR" id="B0CAL3"/>
<dbReference type="STRING" id="329726.AM1_4098"/>
<dbReference type="KEGG" id="amr:AM1_4098"/>
<dbReference type="eggNOG" id="COG0228">
    <property type="taxonomic scope" value="Bacteria"/>
</dbReference>
<dbReference type="HOGENOM" id="CLU_100590_5_2_3"/>
<dbReference type="OrthoDB" id="9807878at2"/>
<dbReference type="Proteomes" id="UP000000268">
    <property type="component" value="Chromosome"/>
</dbReference>
<dbReference type="GO" id="GO:0005737">
    <property type="term" value="C:cytoplasm"/>
    <property type="evidence" value="ECO:0007669"/>
    <property type="project" value="UniProtKB-ARBA"/>
</dbReference>
<dbReference type="GO" id="GO:0015935">
    <property type="term" value="C:small ribosomal subunit"/>
    <property type="evidence" value="ECO:0007669"/>
    <property type="project" value="TreeGrafter"/>
</dbReference>
<dbReference type="GO" id="GO:0003735">
    <property type="term" value="F:structural constituent of ribosome"/>
    <property type="evidence" value="ECO:0007669"/>
    <property type="project" value="InterPro"/>
</dbReference>
<dbReference type="GO" id="GO:0006412">
    <property type="term" value="P:translation"/>
    <property type="evidence" value="ECO:0007669"/>
    <property type="project" value="UniProtKB-UniRule"/>
</dbReference>
<dbReference type="Gene3D" id="3.30.1320.10">
    <property type="match status" value="1"/>
</dbReference>
<dbReference type="HAMAP" id="MF_00385">
    <property type="entry name" value="Ribosomal_bS16"/>
    <property type="match status" value="1"/>
</dbReference>
<dbReference type="InterPro" id="IPR000307">
    <property type="entry name" value="Ribosomal_bS16"/>
</dbReference>
<dbReference type="InterPro" id="IPR020592">
    <property type="entry name" value="Ribosomal_bS16_CS"/>
</dbReference>
<dbReference type="InterPro" id="IPR023803">
    <property type="entry name" value="Ribosomal_bS16_dom_sf"/>
</dbReference>
<dbReference type="NCBIfam" id="TIGR00002">
    <property type="entry name" value="S16"/>
    <property type="match status" value="1"/>
</dbReference>
<dbReference type="PANTHER" id="PTHR12919">
    <property type="entry name" value="30S RIBOSOMAL PROTEIN S16"/>
    <property type="match status" value="1"/>
</dbReference>
<dbReference type="PANTHER" id="PTHR12919:SF20">
    <property type="entry name" value="SMALL RIBOSOMAL SUBUNIT PROTEIN BS16M"/>
    <property type="match status" value="1"/>
</dbReference>
<dbReference type="Pfam" id="PF00886">
    <property type="entry name" value="Ribosomal_S16"/>
    <property type="match status" value="1"/>
</dbReference>
<dbReference type="SUPFAM" id="SSF54565">
    <property type="entry name" value="Ribosomal protein S16"/>
    <property type="match status" value="1"/>
</dbReference>
<dbReference type="PROSITE" id="PS00732">
    <property type="entry name" value="RIBOSOMAL_S16"/>
    <property type="match status" value="1"/>
</dbReference>
<accession>B0CAL3</accession>
<comment type="similarity">
    <text evidence="1">Belongs to the bacterial ribosomal protein bS16 family.</text>
</comment>
<sequence>MIKLRLKRYGKKRAASYRIVAMNSRDRRDGRPLEELGYYNPITDETRLHVDAIAKRLKDGAQPTDTVRRILEKASLLEPAKAKA</sequence>
<keyword id="KW-1185">Reference proteome</keyword>
<keyword id="KW-0687">Ribonucleoprotein</keyword>
<keyword id="KW-0689">Ribosomal protein</keyword>
<proteinExistence type="inferred from homology"/>
<name>RS16_ACAM1</name>
<evidence type="ECO:0000255" key="1">
    <source>
        <dbReference type="HAMAP-Rule" id="MF_00385"/>
    </source>
</evidence>
<evidence type="ECO:0000305" key="2"/>
<protein>
    <recommendedName>
        <fullName evidence="1">Small ribosomal subunit protein bS16</fullName>
    </recommendedName>
    <alternativeName>
        <fullName evidence="2">30S ribosomal protein S16</fullName>
    </alternativeName>
</protein>
<reference key="1">
    <citation type="journal article" date="2008" name="Proc. Natl. Acad. Sci. U.S.A.">
        <title>Niche adaptation and genome expansion in the chlorophyll d-producing cyanobacterium Acaryochloris marina.</title>
        <authorList>
            <person name="Swingley W.D."/>
            <person name="Chen M."/>
            <person name="Cheung P.C."/>
            <person name="Conrad A.L."/>
            <person name="Dejesa L.C."/>
            <person name="Hao J."/>
            <person name="Honchak B.M."/>
            <person name="Karbach L.E."/>
            <person name="Kurdoglu A."/>
            <person name="Lahiri S."/>
            <person name="Mastrian S.D."/>
            <person name="Miyashita H."/>
            <person name="Page L."/>
            <person name="Ramakrishna P."/>
            <person name="Satoh S."/>
            <person name="Sattley W.M."/>
            <person name="Shimada Y."/>
            <person name="Taylor H.L."/>
            <person name="Tomo T."/>
            <person name="Tsuchiya T."/>
            <person name="Wang Z.T."/>
            <person name="Raymond J."/>
            <person name="Mimuro M."/>
            <person name="Blankenship R.E."/>
            <person name="Touchman J.W."/>
        </authorList>
    </citation>
    <scope>NUCLEOTIDE SEQUENCE [LARGE SCALE GENOMIC DNA]</scope>
    <source>
        <strain>MBIC 11017</strain>
    </source>
</reference>